<accession>A5U7R4</accession>
<feature type="chain" id="PRO_0000318389" description="Protein translocase subunit SecA 1">
    <location>
        <begin position="1"/>
        <end position="949"/>
    </location>
</feature>
<feature type="region of interest" description="Disordered" evidence="2">
    <location>
        <begin position="869"/>
        <end position="949"/>
    </location>
</feature>
<feature type="compositionally biased region" description="Basic and acidic residues" evidence="2">
    <location>
        <begin position="925"/>
        <end position="934"/>
    </location>
</feature>
<feature type="binding site" evidence="1">
    <location>
        <position position="86"/>
    </location>
    <ligand>
        <name>ATP</name>
        <dbReference type="ChEBI" id="CHEBI:30616"/>
    </ligand>
</feature>
<feature type="binding site" evidence="1">
    <location>
        <begin position="104"/>
        <end position="108"/>
    </location>
    <ligand>
        <name>ATP</name>
        <dbReference type="ChEBI" id="CHEBI:30616"/>
    </ligand>
</feature>
<feature type="binding site" evidence="1">
    <location>
        <position position="493"/>
    </location>
    <ligand>
        <name>ATP</name>
        <dbReference type="ChEBI" id="CHEBI:30616"/>
    </ligand>
</feature>
<reference key="1">
    <citation type="journal article" date="2008" name="PLoS ONE">
        <title>Genetic basis of virulence attenuation revealed by comparative genomic analysis of Mycobacterium tuberculosis strain H37Ra versus H37Rv.</title>
        <authorList>
            <person name="Zheng H."/>
            <person name="Lu L."/>
            <person name="Wang B."/>
            <person name="Pu S."/>
            <person name="Zhang X."/>
            <person name="Zhu G."/>
            <person name="Shi W."/>
            <person name="Zhang L."/>
            <person name="Wang H."/>
            <person name="Wang S."/>
            <person name="Zhao G."/>
            <person name="Zhang Y."/>
        </authorList>
    </citation>
    <scope>NUCLEOTIDE SEQUENCE [LARGE SCALE GENOMIC DNA]</scope>
    <source>
        <strain>ATCC 25177 / H37Ra</strain>
    </source>
</reference>
<comment type="function">
    <text evidence="1">Part of the Sec protein translocase complex. Interacts with the SecYEG preprotein conducting channel. Has a central role in coupling the hydrolysis of ATP to the transfer of proteins into and across the cell membrane, serving as an ATP-driven molecular motor driving the stepwise translocation of polypeptide chains across the membrane.</text>
</comment>
<comment type="catalytic activity">
    <reaction evidence="1">
        <text>ATP + H2O + cellular proteinSide 1 = ADP + phosphate + cellular proteinSide 2.</text>
        <dbReference type="EC" id="7.4.2.8"/>
    </reaction>
</comment>
<comment type="subunit">
    <text evidence="1">Monomer and homodimer. Part of the essential Sec protein translocation apparatus which comprises SecA, SecYEG and auxiliary proteins SecDF. Other proteins may also be involved.</text>
</comment>
<comment type="subcellular location">
    <subcellularLocation>
        <location evidence="1">Cell membrane</location>
        <topology evidence="1">Peripheral membrane protein</topology>
        <orientation evidence="1">Cytoplasmic side</orientation>
    </subcellularLocation>
    <subcellularLocation>
        <location evidence="1">Cytoplasm</location>
    </subcellularLocation>
    <text evidence="1">Distribution is 50-50.</text>
</comment>
<comment type="similarity">
    <text evidence="1">Belongs to the SecA family.</text>
</comment>
<proteinExistence type="inferred from homology"/>
<gene>
    <name evidence="1" type="primary">secA1</name>
    <name type="ordered locus">MRA_3281</name>
</gene>
<keyword id="KW-0067">ATP-binding</keyword>
<keyword id="KW-1003">Cell membrane</keyword>
<keyword id="KW-0963">Cytoplasm</keyword>
<keyword id="KW-0472">Membrane</keyword>
<keyword id="KW-0547">Nucleotide-binding</keyword>
<keyword id="KW-0653">Protein transport</keyword>
<keyword id="KW-1185">Reference proteome</keyword>
<keyword id="KW-1278">Translocase</keyword>
<keyword id="KW-0811">Translocation</keyword>
<keyword id="KW-0813">Transport</keyword>
<name>SECA1_MYCTA</name>
<dbReference type="EC" id="7.4.2.8" evidence="1"/>
<dbReference type="EMBL" id="CP000611">
    <property type="protein sequence ID" value="ABQ75064.1"/>
    <property type="molecule type" value="Genomic_DNA"/>
</dbReference>
<dbReference type="SMR" id="A5U7R4"/>
<dbReference type="KEGG" id="mra:MRA_3281"/>
<dbReference type="eggNOG" id="COG0653">
    <property type="taxonomic scope" value="Bacteria"/>
</dbReference>
<dbReference type="HOGENOM" id="CLU_005314_3_0_11"/>
<dbReference type="Proteomes" id="UP000001988">
    <property type="component" value="Chromosome"/>
</dbReference>
<dbReference type="GO" id="GO:0031522">
    <property type="term" value="C:cell envelope Sec protein transport complex"/>
    <property type="evidence" value="ECO:0007669"/>
    <property type="project" value="TreeGrafter"/>
</dbReference>
<dbReference type="GO" id="GO:0005829">
    <property type="term" value="C:cytosol"/>
    <property type="evidence" value="ECO:0007669"/>
    <property type="project" value="TreeGrafter"/>
</dbReference>
<dbReference type="GO" id="GO:0005886">
    <property type="term" value="C:plasma membrane"/>
    <property type="evidence" value="ECO:0007669"/>
    <property type="project" value="UniProtKB-SubCell"/>
</dbReference>
<dbReference type="GO" id="GO:0005524">
    <property type="term" value="F:ATP binding"/>
    <property type="evidence" value="ECO:0007669"/>
    <property type="project" value="UniProtKB-UniRule"/>
</dbReference>
<dbReference type="GO" id="GO:0008564">
    <property type="term" value="F:protein-exporting ATPase activity"/>
    <property type="evidence" value="ECO:0007669"/>
    <property type="project" value="UniProtKB-EC"/>
</dbReference>
<dbReference type="GO" id="GO:0065002">
    <property type="term" value="P:intracellular protein transmembrane transport"/>
    <property type="evidence" value="ECO:0007669"/>
    <property type="project" value="UniProtKB-UniRule"/>
</dbReference>
<dbReference type="GO" id="GO:0017038">
    <property type="term" value="P:protein import"/>
    <property type="evidence" value="ECO:0007669"/>
    <property type="project" value="InterPro"/>
</dbReference>
<dbReference type="GO" id="GO:0006605">
    <property type="term" value="P:protein targeting"/>
    <property type="evidence" value="ECO:0007669"/>
    <property type="project" value="UniProtKB-UniRule"/>
</dbReference>
<dbReference type="GO" id="GO:0043952">
    <property type="term" value="P:protein transport by the Sec complex"/>
    <property type="evidence" value="ECO:0007669"/>
    <property type="project" value="TreeGrafter"/>
</dbReference>
<dbReference type="CDD" id="cd17928">
    <property type="entry name" value="DEXDc_SecA"/>
    <property type="match status" value="1"/>
</dbReference>
<dbReference type="CDD" id="cd18803">
    <property type="entry name" value="SF2_C_secA"/>
    <property type="match status" value="1"/>
</dbReference>
<dbReference type="FunFam" id="1.10.3060.10:FF:000002">
    <property type="entry name" value="Preprotein translocase subunit SecA"/>
    <property type="match status" value="1"/>
</dbReference>
<dbReference type="FunFam" id="3.40.50.300:FF:000113">
    <property type="entry name" value="Preprotein translocase subunit SecA"/>
    <property type="match status" value="1"/>
</dbReference>
<dbReference type="FunFam" id="3.40.50.300:FF:000334">
    <property type="entry name" value="Protein translocase subunit SecA"/>
    <property type="match status" value="1"/>
</dbReference>
<dbReference type="FunFam" id="3.90.1440.10:FF:000002">
    <property type="entry name" value="Protein translocase subunit SecA"/>
    <property type="match status" value="1"/>
</dbReference>
<dbReference type="Gene3D" id="1.10.3060.10">
    <property type="entry name" value="Helical scaffold and wing domains of SecA"/>
    <property type="match status" value="1"/>
</dbReference>
<dbReference type="Gene3D" id="3.40.50.300">
    <property type="entry name" value="P-loop containing nucleotide triphosphate hydrolases"/>
    <property type="match status" value="2"/>
</dbReference>
<dbReference type="Gene3D" id="3.90.1440.10">
    <property type="entry name" value="SecA, preprotein cross-linking domain"/>
    <property type="match status" value="1"/>
</dbReference>
<dbReference type="HAMAP" id="MF_01382">
    <property type="entry name" value="SecA"/>
    <property type="match status" value="1"/>
</dbReference>
<dbReference type="InterPro" id="IPR014001">
    <property type="entry name" value="Helicase_ATP-bd"/>
</dbReference>
<dbReference type="InterPro" id="IPR001650">
    <property type="entry name" value="Helicase_C-like"/>
</dbReference>
<dbReference type="InterPro" id="IPR027417">
    <property type="entry name" value="P-loop_NTPase"/>
</dbReference>
<dbReference type="InterPro" id="IPR000185">
    <property type="entry name" value="SecA"/>
</dbReference>
<dbReference type="InterPro" id="IPR020937">
    <property type="entry name" value="SecA_CS"/>
</dbReference>
<dbReference type="InterPro" id="IPR011115">
    <property type="entry name" value="SecA_DEAD"/>
</dbReference>
<dbReference type="InterPro" id="IPR014018">
    <property type="entry name" value="SecA_motor_DEAD"/>
</dbReference>
<dbReference type="InterPro" id="IPR011130">
    <property type="entry name" value="SecA_preprotein_X-link_dom"/>
</dbReference>
<dbReference type="InterPro" id="IPR044722">
    <property type="entry name" value="SecA_SF2_C"/>
</dbReference>
<dbReference type="InterPro" id="IPR011116">
    <property type="entry name" value="SecA_Wing/Scaffold"/>
</dbReference>
<dbReference type="InterPro" id="IPR036266">
    <property type="entry name" value="SecA_Wing/Scaffold_sf"/>
</dbReference>
<dbReference type="InterPro" id="IPR036670">
    <property type="entry name" value="SecA_X-link_sf"/>
</dbReference>
<dbReference type="NCBIfam" id="NF009538">
    <property type="entry name" value="PRK12904.1"/>
    <property type="match status" value="1"/>
</dbReference>
<dbReference type="NCBIfam" id="TIGR00963">
    <property type="entry name" value="secA"/>
    <property type="match status" value="1"/>
</dbReference>
<dbReference type="PANTHER" id="PTHR30612:SF0">
    <property type="entry name" value="CHLOROPLAST PROTEIN-TRANSPORTING ATPASE"/>
    <property type="match status" value="1"/>
</dbReference>
<dbReference type="PANTHER" id="PTHR30612">
    <property type="entry name" value="SECA INNER MEMBRANE COMPONENT OF SEC PROTEIN SECRETION SYSTEM"/>
    <property type="match status" value="1"/>
</dbReference>
<dbReference type="Pfam" id="PF21090">
    <property type="entry name" value="P-loop_SecA"/>
    <property type="match status" value="1"/>
</dbReference>
<dbReference type="Pfam" id="PF07517">
    <property type="entry name" value="SecA_DEAD"/>
    <property type="match status" value="1"/>
</dbReference>
<dbReference type="Pfam" id="PF01043">
    <property type="entry name" value="SecA_PP_bind"/>
    <property type="match status" value="1"/>
</dbReference>
<dbReference type="Pfam" id="PF07516">
    <property type="entry name" value="SecA_SW"/>
    <property type="match status" value="1"/>
</dbReference>
<dbReference type="PRINTS" id="PR00906">
    <property type="entry name" value="SECA"/>
</dbReference>
<dbReference type="SMART" id="SM00957">
    <property type="entry name" value="SecA_DEAD"/>
    <property type="match status" value="1"/>
</dbReference>
<dbReference type="SMART" id="SM00958">
    <property type="entry name" value="SecA_PP_bind"/>
    <property type="match status" value="1"/>
</dbReference>
<dbReference type="SUPFAM" id="SSF81886">
    <property type="entry name" value="Helical scaffold and wing domains of SecA"/>
    <property type="match status" value="1"/>
</dbReference>
<dbReference type="SUPFAM" id="SSF52540">
    <property type="entry name" value="P-loop containing nucleoside triphosphate hydrolases"/>
    <property type="match status" value="2"/>
</dbReference>
<dbReference type="SUPFAM" id="SSF81767">
    <property type="entry name" value="Pre-protein crosslinking domain of SecA"/>
    <property type="match status" value="1"/>
</dbReference>
<dbReference type="PROSITE" id="PS01312">
    <property type="entry name" value="SECA"/>
    <property type="match status" value="1"/>
</dbReference>
<dbReference type="PROSITE" id="PS51196">
    <property type="entry name" value="SECA_MOTOR_DEAD"/>
    <property type="match status" value="1"/>
</dbReference>
<sequence length="949" mass="106022">MLSKLLRLGEGRMVKRLKKVADYVGTLSDDVEKLTDAELRAKTDEFKRRLADQKNPETLDDLLPEAFAVAREAAWRVLDQRPFDVQVMGAAALHLGNVAEMKTGEGKTLTCVLPAYLNALAGNGVHIVTVNDYLAKRDSEWMGRVHRFLGLQVGVILATMTPDERRVAYNADITYGTNNEFGFDYLRDNMAHSLDDLVQRGHHYAIVDEVDSILIDEARTPLIISGPADGASNWYTEFARLAPLMEKDVHYEVDLRKRTVGVHEKGVEFVEDQLGIDNLYEAANSPLVSYLNNALKAKELFSRDKDYIVRDGEVLIVDEFTGRVLIGRRYNEGMHQAIEAKEHVEIKAENQTLATITLQNYFRLYDKLAGMTGTAQTEAAELHEIYKLGVVSIPTNMPMIREDQSDLIYKTEEAKYIAVVDDVAERYAKGQPVLIGTTSVERSEYLSRQFTKRRIPHNVLNAKYHEQEATIIAVAGRRGGVTVATNMAGRGTDIVLGGNVDFLTDQRLRERGLDPVETPEEYEAAWHSELPIVKEEASKEAKEVIEAGGLYVLGTERHESRRIDNQLRGRSGRQGDPGESRFYLSLGDELMRRFNGAALETLLTRLNLPDDVPIEAKMVTRAIKSAQTQVEQQNFEVRKNVLKYDEVMNQQRKVIYAERRRILEGENLKDQALDMVRDVITAYVDGATGEGYAEDWDLDALWTALKTLYPVGITADSLTRKDHEFERDDLTREELLEALLKDAERAYAAREAELEEIAGEGAMRQLERNVLLNVIDRKWREHLYEMDYLKEGIGLRAMAQRDPLVEYQREGYDMFMAMLDGMKEESVGFLFNVTVEAVPAPPVAPAAEPAELAEFAAAAAAAAQQRSAVDGGARERAPSALRAKGVASESPALTYSGPAEDGSAQVQRNGGGAHKTPAGVPAGASRRERREAARRQGRGAKPPKSVKKR</sequence>
<evidence type="ECO:0000255" key="1">
    <source>
        <dbReference type="HAMAP-Rule" id="MF_01382"/>
    </source>
</evidence>
<evidence type="ECO:0000256" key="2">
    <source>
        <dbReference type="SAM" id="MobiDB-lite"/>
    </source>
</evidence>
<organism>
    <name type="scientific">Mycobacterium tuberculosis (strain ATCC 25177 / H37Ra)</name>
    <dbReference type="NCBI Taxonomy" id="419947"/>
    <lineage>
        <taxon>Bacteria</taxon>
        <taxon>Bacillati</taxon>
        <taxon>Actinomycetota</taxon>
        <taxon>Actinomycetes</taxon>
        <taxon>Mycobacteriales</taxon>
        <taxon>Mycobacteriaceae</taxon>
        <taxon>Mycobacterium</taxon>
        <taxon>Mycobacterium tuberculosis complex</taxon>
    </lineage>
</organism>
<protein>
    <recommendedName>
        <fullName evidence="1">Protein translocase subunit SecA 1</fullName>
        <ecNumber evidence="1">7.4.2.8</ecNumber>
    </recommendedName>
</protein>